<feature type="chain" id="PRO_0000101824" description="Receptor expression-enhancing protein 2">
    <location>
        <begin position="1"/>
        <end position="254"/>
    </location>
</feature>
<feature type="transmembrane region" description="Helical" evidence="2">
    <location>
        <begin position="1"/>
        <end position="21"/>
    </location>
</feature>
<feature type="transmembrane region" description="Helical" evidence="2">
    <location>
        <begin position="35"/>
        <end position="55"/>
    </location>
</feature>
<feature type="region of interest" description="Disordered" evidence="3">
    <location>
        <begin position="194"/>
        <end position="254"/>
    </location>
</feature>
<feature type="compositionally biased region" description="Basic and acidic residues" evidence="3">
    <location>
        <begin position="205"/>
        <end position="219"/>
    </location>
</feature>
<feature type="modified residue" description="Phosphoserine" evidence="5">
    <location>
        <position position="152"/>
    </location>
</feature>
<dbReference type="EMBL" id="AY562230">
    <property type="protein sequence ID" value="AAT70675.1"/>
    <property type="molecule type" value="mRNA"/>
</dbReference>
<dbReference type="EMBL" id="BC020184">
    <property type="protein sequence ID" value="AAH20184.2"/>
    <property type="molecule type" value="mRNA"/>
</dbReference>
<dbReference type="CCDS" id="CCDS29135.1"/>
<dbReference type="RefSeq" id="NP_001191843.1">
    <property type="nucleotide sequence ID" value="NM_001204914.1"/>
</dbReference>
<dbReference type="RefSeq" id="NP_659114.2">
    <property type="nucleotide sequence ID" value="NM_144865.2"/>
</dbReference>
<dbReference type="BioGRID" id="230387">
    <property type="interactions" value="2"/>
</dbReference>
<dbReference type="FunCoup" id="Q8VCD6">
    <property type="interactions" value="607"/>
</dbReference>
<dbReference type="IntAct" id="Q8VCD6">
    <property type="interactions" value="1"/>
</dbReference>
<dbReference type="MINT" id="Q8VCD6"/>
<dbReference type="STRING" id="10090.ENSMUSP00000036065"/>
<dbReference type="GlyGen" id="Q8VCD6">
    <property type="glycosylation" value="1 site"/>
</dbReference>
<dbReference type="iPTMnet" id="Q8VCD6"/>
<dbReference type="PhosphoSitePlus" id="Q8VCD6"/>
<dbReference type="PaxDb" id="10090-ENSMUSP00000036065"/>
<dbReference type="ProteomicsDB" id="255282"/>
<dbReference type="ABCD" id="Q8VCD6">
    <property type="antibodies" value="2 sequenced antibodies"/>
</dbReference>
<dbReference type="Antibodypedia" id="26670">
    <property type="antibodies" value="394 antibodies from 28 providers"/>
</dbReference>
<dbReference type="DNASU" id="225362"/>
<dbReference type="Ensembl" id="ENSMUST00000043484.8">
    <property type="protein sequence ID" value="ENSMUSP00000036065.8"/>
    <property type="gene ID" value="ENSMUSG00000038555.8"/>
</dbReference>
<dbReference type="GeneID" id="225362"/>
<dbReference type="KEGG" id="mmu:225362"/>
<dbReference type="UCSC" id="uc008elr.2">
    <property type="organism name" value="mouse"/>
</dbReference>
<dbReference type="AGR" id="MGI:2385070"/>
<dbReference type="CTD" id="51308"/>
<dbReference type="MGI" id="MGI:2385070">
    <property type="gene designation" value="Reep2"/>
</dbReference>
<dbReference type="VEuPathDB" id="HostDB:ENSMUSG00000038555"/>
<dbReference type="eggNOG" id="KOG1726">
    <property type="taxonomic scope" value="Eukaryota"/>
</dbReference>
<dbReference type="GeneTree" id="ENSGT00940000160001"/>
<dbReference type="HOGENOM" id="CLU_028431_0_1_1"/>
<dbReference type="InParanoid" id="Q8VCD6"/>
<dbReference type="OMA" id="WAERCPV"/>
<dbReference type="OrthoDB" id="434647at2759"/>
<dbReference type="PhylomeDB" id="Q8VCD6"/>
<dbReference type="TreeFam" id="TF314177"/>
<dbReference type="BioGRID-ORCS" id="225362">
    <property type="hits" value="3 hits in 76 CRISPR screens"/>
</dbReference>
<dbReference type="CD-CODE" id="CE726F99">
    <property type="entry name" value="Postsynaptic density"/>
</dbReference>
<dbReference type="ChiTaRS" id="Reep2">
    <property type="organism name" value="mouse"/>
</dbReference>
<dbReference type="PRO" id="PR:Q8VCD6"/>
<dbReference type="Proteomes" id="UP000000589">
    <property type="component" value="Chromosome 18"/>
</dbReference>
<dbReference type="RNAct" id="Q8VCD6">
    <property type="molecule type" value="protein"/>
</dbReference>
<dbReference type="Bgee" id="ENSMUSG00000038555">
    <property type="expression patterns" value="Expressed in animal zygote and 155 other cell types or tissues"/>
</dbReference>
<dbReference type="GO" id="GO:0005881">
    <property type="term" value="C:cytoplasmic microtubule"/>
    <property type="evidence" value="ECO:0000250"/>
    <property type="project" value="UniProtKB"/>
</dbReference>
<dbReference type="GO" id="GO:0005783">
    <property type="term" value="C:endoplasmic reticulum"/>
    <property type="evidence" value="ECO:0000250"/>
    <property type="project" value="UniProtKB"/>
</dbReference>
<dbReference type="GO" id="GO:0005789">
    <property type="term" value="C:endoplasmic reticulum membrane"/>
    <property type="evidence" value="ECO:0000314"/>
    <property type="project" value="UniProtKB"/>
</dbReference>
<dbReference type="GO" id="GO:0005886">
    <property type="term" value="C:plasma membrane"/>
    <property type="evidence" value="ECO:0000314"/>
    <property type="project" value="MGI"/>
</dbReference>
<dbReference type="GO" id="GO:0031883">
    <property type="term" value="F:taste receptor binding"/>
    <property type="evidence" value="ECO:0000353"/>
    <property type="project" value="MGI"/>
</dbReference>
<dbReference type="GO" id="GO:0071786">
    <property type="term" value="P:endoplasmic reticulum tubular network organization"/>
    <property type="evidence" value="ECO:0000250"/>
    <property type="project" value="UniProtKB"/>
</dbReference>
<dbReference type="GO" id="GO:0032596">
    <property type="term" value="P:protein transport into membrane raft"/>
    <property type="evidence" value="ECO:0000314"/>
    <property type="project" value="MGI"/>
</dbReference>
<dbReference type="GO" id="GO:0032386">
    <property type="term" value="P:regulation of intracellular transport"/>
    <property type="evidence" value="ECO:0000314"/>
    <property type="project" value="UniProtKB"/>
</dbReference>
<dbReference type="GO" id="GO:0050913">
    <property type="term" value="P:sensory perception of bitter taste"/>
    <property type="evidence" value="ECO:0000316"/>
    <property type="project" value="MGI"/>
</dbReference>
<dbReference type="GO" id="GO:0050916">
    <property type="term" value="P:sensory perception of sweet taste"/>
    <property type="evidence" value="ECO:0000316"/>
    <property type="project" value="MGI"/>
</dbReference>
<dbReference type="InterPro" id="IPR004345">
    <property type="entry name" value="TB2_DP1_HVA22"/>
</dbReference>
<dbReference type="PANTHER" id="PTHR12300">
    <property type="entry name" value="HVA22-LIKE PROTEINS"/>
    <property type="match status" value="1"/>
</dbReference>
<dbReference type="PANTHER" id="PTHR12300:SF29">
    <property type="entry name" value="RECEPTOR EXPRESSION-ENHANCING PROTEIN 2"/>
    <property type="match status" value="1"/>
</dbReference>
<dbReference type="Pfam" id="PF03134">
    <property type="entry name" value="TB2_DP1_HVA22"/>
    <property type="match status" value="1"/>
</dbReference>
<protein>
    <recommendedName>
        <fullName>Receptor expression-enhancing protein 2</fullName>
    </recommendedName>
</protein>
<accession>Q8VCD6</accession>
<sequence length="254" mass="28437">MVSWIISRLVVLIFGTLYPAYSSYKAVKTKNVKEYVKWMMYWIVFAFFTTAETLTDIILSWFPFYFELKIAFVIWLLSPYTKGSSVLYRKFVHPTLSNKEKEIDEYITQARDKSYETMMRVGKRGLNLAANAAVTAAAKGQGVLSEKLRSFSMQDLTLIRDEDALPLQGPDGRLQPGPVGLLDTIEDLGDEPALSLRSSTSQPDPRTETSEDDLGDKAPKRTKPIKKVPRAEPPASKTLKTRPKKKSSGGGDSA</sequence>
<reference key="1">
    <citation type="journal article" date="2004" name="Cell">
        <title>RTP family members induce functional expression of mammalian odorant receptors.</title>
        <authorList>
            <person name="Saito H."/>
            <person name="Kubota M."/>
            <person name="Roberts R.W."/>
            <person name="Chi Q."/>
            <person name="Matsunami H."/>
        </authorList>
    </citation>
    <scope>NUCLEOTIDE SEQUENCE [MRNA]</scope>
    <source>
        <tissue>Olfactory epithelium</tissue>
    </source>
</reference>
<reference key="2">
    <citation type="journal article" date="2004" name="Genome Res.">
        <title>The status, quality, and expansion of the NIH full-length cDNA project: the Mammalian Gene Collection (MGC).</title>
        <authorList>
            <consortium name="The MGC Project Team"/>
        </authorList>
    </citation>
    <scope>NUCLEOTIDE SEQUENCE [LARGE SCALE MRNA]</scope>
    <source>
        <tissue>Eye</tissue>
    </source>
</reference>
<reference key="3">
    <citation type="journal article" date="2010" name="Cell">
        <title>A tissue-specific atlas of mouse protein phosphorylation and expression.</title>
        <authorList>
            <person name="Huttlin E.L."/>
            <person name="Jedrychowski M.P."/>
            <person name="Elias J.E."/>
            <person name="Goswami T."/>
            <person name="Rad R."/>
            <person name="Beausoleil S.A."/>
            <person name="Villen J."/>
            <person name="Haas W."/>
            <person name="Sowa M.E."/>
            <person name="Gygi S.P."/>
        </authorList>
    </citation>
    <scope>PHOSPHORYLATION [LARGE SCALE ANALYSIS] AT SER-152</scope>
    <scope>IDENTIFICATION BY MASS SPECTROMETRY [LARGE SCALE ANALYSIS]</scope>
    <source>
        <tissue>Brain</tissue>
        <tissue>Lung</tissue>
        <tissue>Testis</tissue>
    </source>
</reference>
<keyword id="KW-0472">Membrane</keyword>
<keyword id="KW-0597">Phosphoprotein</keyword>
<keyword id="KW-1185">Reference proteome</keyword>
<keyword id="KW-0812">Transmembrane</keyword>
<keyword id="KW-1133">Transmembrane helix</keyword>
<organism>
    <name type="scientific">Mus musculus</name>
    <name type="common">Mouse</name>
    <dbReference type="NCBI Taxonomy" id="10090"/>
    <lineage>
        <taxon>Eukaryota</taxon>
        <taxon>Metazoa</taxon>
        <taxon>Chordata</taxon>
        <taxon>Craniata</taxon>
        <taxon>Vertebrata</taxon>
        <taxon>Euteleostomi</taxon>
        <taxon>Mammalia</taxon>
        <taxon>Eutheria</taxon>
        <taxon>Euarchontoglires</taxon>
        <taxon>Glires</taxon>
        <taxon>Rodentia</taxon>
        <taxon>Myomorpha</taxon>
        <taxon>Muroidea</taxon>
        <taxon>Muridae</taxon>
        <taxon>Murinae</taxon>
        <taxon>Mus</taxon>
        <taxon>Mus</taxon>
    </lineage>
</organism>
<gene>
    <name type="primary">Reep2</name>
</gene>
<name>REEP2_MOUSE</name>
<comment type="function">
    <text evidence="1">Required for endoplasmic reticulum (ER) network formation, shaping and remodeling. May enhance the cell surface expression of odorant receptors (By similarity).</text>
</comment>
<comment type="subunit">
    <text evidence="1">Interacts with odorant receptor proteins.</text>
</comment>
<comment type="subcellular location">
    <subcellularLocation>
        <location evidence="1">Membrane</location>
        <topology evidence="1">Multi-pass membrane protein</topology>
    </subcellularLocation>
</comment>
<comment type="similarity">
    <text evidence="4">Belongs to the DP1 family.</text>
</comment>
<proteinExistence type="evidence at protein level"/>
<evidence type="ECO:0000250" key="1"/>
<evidence type="ECO:0000255" key="2"/>
<evidence type="ECO:0000256" key="3">
    <source>
        <dbReference type="SAM" id="MobiDB-lite"/>
    </source>
</evidence>
<evidence type="ECO:0000305" key="4"/>
<evidence type="ECO:0007744" key="5">
    <source>
    </source>
</evidence>